<reference key="1">
    <citation type="journal article" date="1997" name="J. Bacteriol.">
        <title>Novel Vibrio cholerae O139 genes involved in lipopolysaccharide biosynthesis.</title>
        <authorList>
            <person name="Stroeher U.H."/>
            <person name="Parasivam G."/>
            <person name="Dredge B.K."/>
            <person name="Manning P.A."/>
        </authorList>
    </citation>
    <scope>NUCLEOTIDE SEQUENCE [GENOMIC DNA]</scope>
    <source>
        <strain>AI-1837 / Serotype O139</strain>
    </source>
</reference>
<reference key="2">
    <citation type="journal article" date="1999" name="Gene">
        <title>The genes responsible for O-antigen synthesis of Vibrio cholerae O139 are closely related to those of Vibrio cholerae O22.</title>
        <authorList>
            <person name="Yamasaki S."/>
            <person name="Shimizu T."/>
            <person name="Hoshino K."/>
            <person name="Ho S.-T."/>
            <person name="Shimada T."/>
            <person name="Nair G.B."/>
            <person name="Takeda Y."/>
        </authorList>
    </citation>
    <scope>NUCLEOTIDE SEQUENCE [GENOMIC DNA]</scope>
    <source>
        <strain>ATCC 51394 / MO45 / Serotype O139</strain>
    </source>
</reference>
<reference key="3">
    <citation type="submission" date="1995-10" db="EMBL/GenBank/DDBJ databases">
        <authorList>
            <person name="Dumontier S.E."/>
            <person name="Escuyer V.E."/>
            <person name="Berche P."/>
        </authorList>
    </citation>
    <scope>NUCLEOTIDE SEQUENCE [GENOMIC DNA] OF 1-348</scope>
    <source>
        <strain>ATCC 51394 / MO45 / Serotype O139</strain>
    </source>
</reference>
<dbReference type="EC" id="4.2.1.47" evidence="1"/>
<dbReference type="EMBL" id="Y07786">
    <property type="protein sequence ID" value="CAA69111.1"/>
    <property type="molecule type" value="Genomic_DNA"/>
</dbReference>
<dbReference type="EMBL" id="AB012956">
    <property type="protein sequence ID" value="BAA33595.1"/>
    <property type="molecule type" value="Genomic_DNA"/>
</dbReference>
<dbReference type="EMBL" id="U24571">
    <property type="protein sequence ID" value="AAA77032.1"/>
    <property type="molecule type" value="Genomic_DNA"/>
</dbReference>
<dbReference type="SMR" id="Q56598"/>
<dbReference type="PATRIC" id="fig|666.1969.peg.2989"/>
<dbReference type="UniPathway" id="UPA00128">
    <property type="reaction ID" value="UER00190"/>
</dbReference>
<dbReference type="GO" id="GO:0008446">
    <property type="term" value="F:GDP-mannose 4,6-dehydratase activity"/>
    <property type="evidence" value="ECO:0007669"/>
    <property type="project" value="UniProtKB-UniRule"/>
</dbReference>
<dbReference type="GO" id="GO:0070401">
    <property type="term" value="F:NADP+ binding"/>
    <property type="evidence" value="ECO:0007669"/>
    <property type="project" value="UniProtKB-UniRule"/>
</dbReference>
<dbReference type="GO" id="GO:0042351">
    <property type="term" value="P:'de novo' GDP-L-fucose biosynthetic process"/>
    <property type="evidence" value="ECO:0007669"/>
    <property type="project" value="UniProtKB-UniPathway"/>
</dbReference>
<dbReference type="CDD" id="cd05260">
    <property type="entry name" value="GDP_MD_SDR_e"/>
    <property type="match status" value="1"/>
</dbReference>
<dbReference type="FunFam" id="3.40.50.720:FF:000924">
    <property type="entry name" value="GDP-mannose 4,6 dehydratase"/>
    <property type="match status" value="1"/>
</dbReference>
<dbReference type="Gene3D" id="3.40.50.720">
    <property type="entry name" value="NAD(P)-binding Rossmann-like Domain"/>
    <property type="match status" value="1"/>
</dbReference>
<dbReference type="Gene3D" id="3.90.25.10">
    <property type="entry name" value="UDP-galactose 4-epimerase, domain 1"/>
    <property type="match status" value="1"/>
</dbReference>
<dbReference type="HAMAP" id="MF_00955">
    <property type="entry name" value="GDP_Man_dehydratase"/>
    <property type="match status" value="1"/>
</dbReference>
<dbReference type="InterPro" id="IPR006368">
    <property type="entry name" value="GDP_Man_deHydtase"/>
</dbReference>
<dbReference type="InterPro" id="IPR016040">
    <property type="entry name" value="NAD(P)-bd_dom"/>
</dbReference>
<dbReference type="InterPro" id="IPR036291">
    <property type="entry name" value="NAD(P)-bd_dom_sf"/>
</dbReference>
<dbReference type="NCBIfam" id="TIGR01472">
    <property type="entry name" value="gmd"/>
    <property type="match status" value="1"/>
</dbReference>
<dbReference type="PANTHER" id="PTHR43715:SF1">
    <property type="entry name" value="GDP-MANNOSE 4,6 DEHYDRATASE"/>
    <property type="match status" value="1"/>
</dbReference>
<dbReference type="PANTHER" id="PTHR43715">
    <property type="entry name" value="GDP-MANNOSE 4,6-DEHYDRATASE"/>
    <property type="match status" value="1"/>
</dbReference>
<dbReference type="Pfam" id="PF16363">
    <property type="entry name" value="GDP_Man_Dehyd"/>
    <property type="match status" value="1"/>
</dbReference>
<dbReference type="SUPFAM" id="SSF51735">
    <property type="entry name" value="NAD(P)-binding Rossmann-fold domains"/>
    <property type="match status" value="1"/>
</dbReference>
<protein>
    <recommendedName>
        <fullName evidence="1">GDP-mannose 4,6-dehydratase</fullName>
        <ecNumber evidence="1">4.2.1.47</ecNumber>
    </recommendedName>
    <alternativeName>
        <fullName evidence="1">GDP-D-mannose dehydratase</fullName>
    </alternativeName>
</protein>
<gene>
    <name evidence="1" type="primary">gmd</name>
    <name type="synonym">rfbD</name>
</gene>
<accession>Q56598</accession>
<organism>
    <name type="scientific">Vibrio cholerae</name>
    <dbReference type="NCBI Taxonomy" id="666"/>
    <lineage>
        <taxon>Bacteria</taxon>
        <taxon>Pseudomonadati</taxon>
        <taxon>Pseudomonadota</taxon>
        <taxon>Gammaproteobacteria</taxon>
        <taxon>Vibrionales</taxon>
        <taxon>Vibrionaceae</taxon>
        <taxon>Vibrio</taxon>
    </lineage>
</organism>
<proteinExistence type="inferred from homology"/>
<comment type="function">
    <text evidence="1">Catalyzes the conversion of GDP-D-mannose to GDP-4-dehydro-6-deoxy-D-mannose.</text>
</comment>
<comment type="catalytic activity">
    <reaction evidence="1">
        <text>GDP-alpha-D-mannose = GDP-4-dehydro-alpha-D-rhamnose + H2O</text>
        <dbReference type="Rhea" id="RHEA:23820"/>
        <dbReference type="ChEBI" id="CHEBI:15377"/>
        <dbReference type="ChEBI" id="CHEBI:57527"/>
        <dbReference type="ChEBI" id="CHEBI:57964"/>
        <dbReference type="EC" id="4.2.1.47"/>
    </reaction>
</comment>
<comment type="cofactor">
    <cofactor evidence="1">
        <name>NADP(+)</name>
        <dbReference type="ChEBI" id="CHEBI:58349"/>
    </cofactor>
</comment>
<comment type="pathway">
    <text>Nucleotide-sugar biosynthesis; GDP-L-fucose biosynthesis via de novo pathway; GDP-L-fucose from GDP-alpha-D-mannose: step 1/2.</text>
</comment>
<comment type="similarity">
    <text evidence="1">Belongs to the NAD(P)-dependent epimerase/dehydratase family. GDP-mannose 4,6-dehydratase subfamily.</text>
</comment>
<sequence>MKKKALITGVTGQDGSYLAEFLLAKGYEVHGIKRRASSFNTQRVDHIYQDPHVDNASFILHYGDLTDSSNLTRILQEVKPDEVYNLGAQSHVAVSFESPEYTADVDAMGTLRLLEAIRLLGLEKTTKFYQASTSELYGLVQETPQKETTPFYPRSPYAVAKMYAYWIVVNYRESYGMYACNGILFNHESPRRGETFVTRKITRGLANIAQGLEKCLYMGNMDALRDWGHAKDYVRMQWMMLQQDQPEDFVIATGVQYSVRQFIEWSAKELGVTLTFEGQGVDEKGIVTAIEGDKAPALKVGDVVVQIDPRYFRPAEVETLLGDPSKAKQKLGWTPEITVQEMCAEMVMEDLKVAQRHALLKLHGHDVPVSVE</sequence>
<evidence type="ECO:0000255" key="1">
    <source>
        <dbReference type="HAMAP-Rule" id="MF_00955"/>
    </source>
</evidence>
<name>GM4D_VIBCL</name>
<feature type="chain" id="PRO_0000201718" description="GDP-mannose 4,6-dehydratase">
    <location>
        <begin position="1"/>
        <end position="372"/>
    </location>
</feature>
<feature type="active site" evidence="1">
    <location>
        <position position="133"/>
    </location>
</feature>
<feature type="active site" description="Nucleophile" evidence="1">
    <location>
        <position position="135"/>
    </location>
</feature>
<feature type="active site" description="Nucleophile" evidence="1">
    <location>
        <position position="157"/>
    </location>
</feature>
<feature type="binding site" evidence="1">
    <location>
        <begin position="9"/>
        <end position="14"/>
    </location>
    <ligand>
        <name>NADP(+)</name>
        <dbReference type="ChEBI" id="CHEBI:58349"/>
    </ligand>
</feature>
<feature type="binding site" evidence="1">
    <location>
        <begin position="64"/>
        <end position="65"/>
    </location>
    <ligand>
        <name>NADP(+)</name>
        <dbReference type="ChEBI" id="CHEBI:58349"/>
    </ligand>
</feature>
<feature type="binding site" evidence="1">
    <location>
        <begin position="86"/>
        <end position="90"/>
    </location>
    <ligand>
        <name>NADP(+)</name>
        <dbReference type="ChEBI" id="CHEBI:58349"/>
    </ligand>
</feature>
<feature type="binding site" evidence="1">
    <location>
        <position position="101"/>
    </location>
    <ligand>
        <name>NADP(+)</name>
        <dbReference type="ChEBI" id="CHEBI:58349"/>
    </ligand>
</feature>
<feature type="binding site" evidence="1">
    <location>
        <position position="161"/>
    </location>
    <ligand>
        <name>NADP(+)</name>
        <dbReference type="ChEBI" id="CHEBI:58349"/>
    </ligand>
</feature>
<feature type="binding site" evidence="1">
    <location>
        <position position="187"/>
    </location>
    <ligand>
        <name>NADP(+)</name>
        <dbReference type="ChEBI" id="CHEBI:58349"/>
    </ligand>
</feature>
<feature type="binding site" evidence="1">
    <location>
        <position position="192"/>
    </location>
    <ligand>
        <name>NADP(+)</name>
        <dbReference type="ChEBI" id="CHEBI:58349"/>
    </ligand>
</feature>
<keyword id="KW-0456">Lyase</keyword>
<keyword id="KW-0521">NADP</keyword>